<dbReference type="EMBL" id="AAFI02000175">
    <property type="protein sequence ID" value="EAL61855.1"/>
    <property type="molecule type" value="Genomic_DNA"/>
</dbReference>
<dbReference type="RefSeq" id="XP_635357.1">
    <property type="nucleotide sequence ID" value="XM_630265.1"/>
</dbReference>
<dbReference type="SMR" id="Q54F33"/>
<dbReference type="PaxDb" id="44689-DDB0189259"/>
<dbReference type="EnsemblProtists" id="EAL61855">
    <property type="protein sequence ID" value="EAL61855"/>
    <property type="gene ID" value="DDB_G0291143"/>
</dbReference>
<dbReference type="GeneID" id="8628005"/>
<dbReference type="KEGG" id="ddi:DDB_G0291143"/>
<dbReference type="dictyBase" id="DDB_G0291143"/>
<dbReference type="VEuPathDB" id="AmoebaDB:DDB_G0291143"/>
<dbReference type="HOGENOM" id="CLU_1035988_0_0_1"/>
<dbReference type="InParanoid" id="Q54F33"/>
<dbReference type="PRO" id="PR:Q54F33"/>
<dbReference type="Proteomes" id="UP000002195">
    <property type="component" value="Chromosome 5"/>
</dbReference>
<name>Y9259_DICDI</name>
<feature type="chain" id="PRO_0000346893" description="Uncharacterized protein DDB_G0291143">
    <location>
        <begin position="1"/>
        <end position="269"/>
    </location>
</feature>
<feature type="region of interest" description="Disordered" evidence="1">
    <location>
        <begin position="1"/>
        <end position="82"/>
    </location>
</feature>
<feature type="compositionally biased region" description="Basic residues" evidence="1">
    <location>
        <begin position="1"/>
        <end position="12"/>
    </location>
</feature>
<feature type="compositionally biased region" description="Acidic residues" evidence="1">
    <location>
        <begin position="21"/>
        <end position="33"/>
    </location>
</feature>
<feature type="compositionally biased region" description="Basic and acidic residues" evidence="1">
    <location>
        <begin position="34"/>
        <end position="63"/>
    </location>
</feature>
<sequence length="269" mass="32300">MSKRTNNKKRKHSEYEKELEPENQDENQDEEFLEDKNKDKNQNKNKDKNKNKDMNKNKNKDMNKNNNKNNNKKKKENGNENVLNSQFYKNIKENRQITDIFKTLVECINEKIESLEDEENNNQDNENFIYICEKLREQFIKIYEKEIIEYKLFREIQALTIVKERELYDILKECDKRLALFRDHQSNCLKAKCDVESQMLSIERKEELNEYLYYDNDSIPENSNSTTTTTKKSKKKTKASFLTLVGKANFNTNFPSNFDRLFSISCERD</sequence>
<proteinExistence type="predicted"/>
<organism>
    <name type="scientific">Dictyostelium discoideum</name>
    <name type="common">Social amoeba</name>
    <dbReference type="NCBI Taxonomy" id="44689"/>
    <lineage>
        <taxon>Eukaryota</taxon>
        <taxon>Amoebozoa</taxon>
        <taxon>Evosea</taxon>
        <taxon>Eumycetozoa</taxon>
        <taxon>Dictyostelia</taxon>
        <taxon>Dictyosteliales</taxon>
        <taxon>Dictyosteliaceae</taxon>
        <taxon>Dictyostelium</taxon>
    </lineage>
</organism>
<keyword id="KW-1185">Reference proteome</keyword>
<accession>Q54F33</accession>
<reference key="1">
    <citation type="journal article" date="2005" name="Nature">
        <title>The genome of the social amoeba Dictyostelium discoideum.</title>
        <authorList>
            <person name="Eichinger L."/>
            <person name="Pachebat J.A."/>
            <person name="Gloeckner G."/>
            <person name="Rajandream M.A."/>
            <person name="Sucgang R."/>
            <person name="Berriman M."/>
            <person name="Song J."/>
            <person name="Olsen R."/>
            <person name="Szafranski K."/>
            <person name="Xu Q."/>
            <person name="Tunggal B."/>
            <person name="Kummerfeld S."/>
            <person name="Madera M."/>
            <person name="Konfortov B.A."/>
            <person name="Rivero F."/>
            <person name="Bankier A.T."/>
            <person name="Lehmann R."/>
            <person name="Hamlin N."/>
            <person name="Davies R."/>
            <person name="Gaudet P."/>
            <person name="Fey P."/>
            <person name="Pilcher K."/>
            <person name="Chen G."/>
            <person name="Saunders D."/>
            <person name="Sodergren E.J."/>
            <person name="Davis P."/>
            <person name="Kerhornou A."/>
            <person name="Nie X."/>
            <person name="Hall N."/>
            <person name="Anjard C."/>
            <person name="Hemphill L."/>
            <person name="Bason N."/>
            <person name="Farbrother P."/>
            <person name="Desany B."/>
            <person name="Just E."/>
            <person name="Morio T."/>
            <person name="Rost R."/>
            <person name="Churcher C.M."/>
            <person name="Cooper J."/>
            <person name="Haydock S."/>
            <person name="van Driessche N."/>
            <person name="Cronin A."/>
            <person name="Goodhead I."/>
            <person name="Muzny D.M."/>
            <person name="Mourier T."/>
            <person name="Pain A."/>
            <person name="Lu M."/>
            <person name="Harper D."/>
            <person name="Lindsay R."/>
            <person name="Hauser H."/>
            <person name="James K.D."/>
            <person name="Quiles M."/>
            <person name="Madan Babu M."/>
            <person name="Saito T."/>
            <person name="Buchrieser C."/>
            <person name="Wardroper A."/>
            <person name="Felder M."/>
            <person name="Thangavelu M."/>
            <person name="Johnson D."/>
            <person name="Knights A."/>
            <person name="Loulseged H."/>
            <person name="Mungall K.L."/>
            <person name="Oliver K."/>
            <person name="Price C."/>
            <person name="Quail M.A."/>
            <person name="Urushihara H."/>
            <person name="Hernandez J."/>
            <person name="Rabbinowitsch E."/>
            <person name="Steffen D."/>
            <person name="Sanders M."/>
            <person name="Ma J."/>
            <person name="Kohara Y."/>
            <person name="Sharp S."/>
            <person name="Simmonds M.N."/>
            <person name="Spiegler S."/>
            <person name="Tivey A."/>
            <person name="Sugano S."/>
            <person name="White B."/>
            <person name="Walker D."/>
            <person name="Woodward J.R."/>
            <person name="Winckler T."/>
            <person name="Tanaka Y."/>
            <person name="Shaulsky G."/>
            <person name="Schleicher M."/>
            <person name="Weinstock G.M."/>
            <person name="Rosenthal A."/>
            <person name="Cox E.C."/>
            <person name="Chisholm R.L."/>
            <person name="Gibbs R.A."/>
            <person name="Loomis W.F."/>
            <person name="Platzer M."/>
            <person name="Kay R.R."/>
            <person name="Williams J.G."/>
            <person name="Dear P.H."/>
            <person name="Noegel A.A."/>
            <person name="Barrell B.G."/>
            <person name="Kuspa A."/>
        </authorList>
    </citation>
    <scope>NUCLEOTIDE SEQUENCE [LARGE SCALE GENOMIC DNA]</scope>
    <source>
        <strain>AX4</strain>
    </source>
</reference>
<protein>
    <recommendedName>
        <fullName>Uncharacterized protein DDB_G0291143</fullName>
    </recommendedName>
</protein>
<evidence type="ECO:0000256" key="1">
    <source>
        <dbReference type="SAM" id="MobiDB-lite"/>
    </source>
</evidence>
<gene>
    <name type="ORF">DDB_G0291143</name>
</gene>